<proteinExistence type="inferred from homology"/>
<comment type="function">
    <text evidence="1">Catalyzes the hydrolysis of UDP-3-O-myristoyl-N-acetylglucosamine to form UDP-3-O-myristoylglucosamine and acetate, the committed step in lipid A biosynthesis.</text>
</comment>
<comment type="catalytic activity">
    <reaction evidence="1">
        <text>a UDP-3-O-[(3R)-3-hydroxyacyl]-N-acetyl-alpha-D-glucosamine + H2O = a UDP-3-O-[(3R)-3-hydroxyacyl]-alpha-D-glucosamine + acetate</text>
        <dbReference type="Rhea" id="RHEA:67816"/>
        <dbReference type="ChEBI" id="CHEBI:15377"/>
        <dbReference type="ChEBI" id="CHEBI:30089"/>
        <dbReference type="ChEBI" id="CHEBI:137740"/>
        <dbReference type="ChEBI" id="CHEBI:173225"/>
        <dbReference type="EC" id="3.5.1.108"/>
    </reaction>
</comment>
<comment type="cofactor">
    <cofactor evidence="1">
        <name>Zn(2+)</name>
        <dbReference type="ChEBI" id="CHEBI:29105"/>
    </cofactor>
</comment>
<comment type="pathway">
    <text evidence="1">Glycolipid biosynthesis; lipid IV(A) biosynthesis; lipid IV(A) from (3R)-3-hydroxytetradecanoyl-[acyl-carrier-protein] and UDP-N-acetyl-alpha-D-glucosamine: step 2/6.</text>
</comment>
<comment type="similarity">
    <text evidence="1">Belongs to the LpxC family.</text>
</comment>
<accession>Q30X16</accession>
<organism>
    <name type="scientific">Oleidesulfovibrio alaskensis (strain ATCC BAA-1058 / DSM 17464 / G20)</name>
    <name type="common">Desulfovibrio alaskensis</name>
    <dbReference type="NCBI Taxonomy" id="207559"/>
    <lineage>
        <taxon>Bacteria</taxon>
        <taxon>Pseudomonadati</taxon>
        <taxon>Thermodesulfobacteriota</taxon>
        <taxon>Desulfovibrionia</taxon>
        <taxon>Desulfovibrionales</taxon>
        <taxon>Desulfovibrionaceae</taxon>
        <taxon>Oleidesulfovibrio</taxon>
    </lineage>
</organism>
<protein>
    <recommendedName>
        <fullName evidence="1">UDP-3-O-acyl-N-acetylglucosamine deacetylase</fullName>
        <shortName evidence="1">UDP-3-O-acyl-GlcNAc deacetylase</shortName>
        <ecNumber evidence="1">3.5.1.108</ecNumber>
    </recommendedName>
    <alternativeName>
        <fullName evidence="1">UDP-3-O-[R-3-hydroxymyristoyl]-N-acetylglucosamine deacetylase</fullName>
    </alternativeName>
</protein>
<gene>
    <name evidence="1" type="primary">lpxC</name>
    <name type="ordered locus">Dde_2986</name>
</gene>
<reference key="1">
    <citation type="journal article" date="2011" name="J. Bacteriol.">
        <title>Complete genome sequence and updated annotation of Desulfovibrio alaskensis G20.</title>
        <authorList>
            <person name="Hauser L.J."/>
            <person name="Land M.L."/>
            <person name="Brown S.D."/>
            <person name="Larimer F."/>
            <person name="Keller K.L."/>
            <person name="Rapp-Giles B.J."/>
            <person name="Price M.N."/>
            <person name="Lin M."/>
            <person name="Bruce D.C."/>
            <person name="Detter J.C."/>
            <person name="Tapia R."/>
            <person name="Han C.S."/>
            <person name="Goodwin L.A."/>
            <person name="Cheng J.F."/>
            <person name="Pitluck S."/>
            <person name="Copeland A."/>
            <person name="Lucas S."/>
            <person name="Nolan M."/>
            <person name="Lapidus A.L."/>
            <person name="Palumbo A.V."/>
            <person name="Wall J.D."/>
        </authorList>
    </citation>
    <scope>NUCLEOTIDE SEQUENCE [LARGE SCALE GENOMIC DNA]</scope>
    <source>
        <strain>ATCC BAA-1058 / DSM 17464 / G20</strain>
    </source>
</reference>
<keyword id="KW-0378">Hydrolase</keyword>
<keyword id="KW-0441">Lipid A biosynthesis</keyword>
<keyword id="KW-0444">Lipid biosynthesis</keyword>
<keyword id="KW-0443">Lipid metabolism</keyword>
<keyword id="KW-0479">Metal-binding</keyword>
<keyword id="KW-1185">Reference proteome</keyword>
<keyword id="KW-0862">Zinc</keyword>
<evidence type="ECO:0000255" key="1">
    <source>
        <dbReference type="HAMAP-Rule" id="MF_00388"/>
    </source>
</evidence>
<sequence>MNQTTIKKTIGCSGIGLHSGKVVRLTLRPAPEDTGIVFHIRTEDGVHRLTPRPDDVIATGLATTLGLNGSSVATVEHLLAAIRGMQIDNIQIDIEGNEIPIMDGSAASFVFLLKDAGIARQNKPRQVYRIKKPVTYERDGKWIKAAPHDGLRIEYTIEFDHPAIGRQSMDIEVTPEAFAGIIAKARTFGFLREVEYLHSNGLALGGSLDNAIVLDEYNVLNEDGLRFDDEFVRHKILDFIGDMALLGAPLQGHFQVHCSGHALNNGFLRTISEHEELYLKRVELSETAQREHAVEAAPAGTPVAA</sequence>
<feature type="chain" id="PRO_0000253663" description="UDP-3-O-acyl-N-acetylglucosamine deacetylase">
    <location>
        <begin position="1"/>
        <end position="305"/>
    </location>
</feature>
<feature type="active site" description="Proton donor" evidence="1">
    <location>
        <position position="261"/>
    </location>
</feature>
<feature type="binding site" evidence="1">
    <location>
        <position position="77"/>
    </location>
    <ligand>
        <name>Zn(2+)</name>
        <dbReference type="ChEBI" id="CHEBI:29105"/>
    </ligand>
</feature>
<feature type="binding site" evidence="1">
    <location>
        <position position="234"/>
    </location>
    <ligand>
        <name>Zn(2+)</name>
        <dbReference type="ChEBI" id="CHEBI:29105"/>
    </ligand>
</feature>
<feature type="binding site" evidence="1">
    <location>
        <position position="238"/>
    </location>
    <ligand>
        <name>Zn(2+)</name>
        <dbReference type="ChEBI" id="CHEBI:29105"/>
    </ligand>
</feature>
<name>LPXC_OLEA2</name>
<dbReference type="EC" id="3.5.1.108" evidence="1"/>
<dbReference type="EMBL" id="CP000112">
    <property type="protein sequence ID" value="ABB39780.1"/>
    <property type="molecule type" value="Genomic_DNA"/>
</dbReference>
<dbReference type="RefSeq" id="WP_011368755.1">
    <property type="nucleotide sequence ID" value="NC_007519.1"/>
</dbReference>
<dbReference type="SMR" id="Q30X16"/>
<dbReference type="STRING" id="207559.Dde_2986"/>
<dbReference type="KEGG" id="dde:Dde_2986"/>
<dbReference type="eggNOG" id="COG0774">
    <property type="taxonomic scope" value="Bacteria"/>
</dbReference>
<dbReference type="HOGENOM" id="CLU_046528_1_0_7"/>
<dbReference type="UniPathway" id="UPA00359">
    <property type="reaction ID" value="UER00478"/>
</dbReference>
<dbReference type="Proteomes" id="UP000002710">
    <property type="component" value="Chromosome"/>
</dbReference>
<dbReference type="GO" id="GO:0016020">
    <property type="term" value="C:membrane"/>
    <property type="evidence" value="ECO:0007669"/>
    <property type="project" value="GOC"/>
</dbReference>
<dbReference type="GO" id="GO:0046872">
    <property type="term" value="F:metal ion binding"/>
    <property type="evidence" value="ECO:0007669"/>
    <property type="project" value="UniProtKB-KW"/>
</dbReference>
<dbReference type="GO" id="GO:0103117">
    <property type="term" value="F:UDP-3-O-acyl-N-acetylglucosamine deacetylase activity"/>
    <property type="evidence" value="ECO:0007669"/>
    <property type="project" value="UniProtKB-UniRule"/>
</dbReference>
<dbReference type="GO" id="GO:0009245">
    <property type="term" value="P:lipid A biosynthetic process"/>
    <property type="evidence" value="ECO:0007669"/>
    <property type="project" value="UniProtKB-UniRule"/>
</dbReference>
<dbReference type="Gene3D" id="3.30.230.20">
    <property type="entry name" value="lpxc deacetylase, domain 1"/>
    <property type="match status" value="1"/>
</dbReference>
<dbReference type="Gene3D" id="3.30.1700.10">
    <property type="entry name" value="lpxc deacetylase, domain 2"/>
    <property type="match status" value="1"/>
</dbReference>
<dbReference type="HAMAP" id="MF_00388">
    <property type="entry name" value="LpxC"/>
    <property type="match status" value="1"/>
</dbReference>
<dbReference type="InterPro" id="IPR020568">
    <property type="entry name" value="Ribosomal_Su5_D2-typ_SF"/>
</dbReference>
<dbReference type="InterPro" id="IPR004463">
    <property type="entry name" value="UDP-acyl_GlcNac_deAcase"/>
</dbReference>
<dbReference type="InterPro" id="IPR011334">
    <property type="entry name" value="UDP-acyl_GlcNac_deAcase_C"/>
</dbReference>
<dbReference type="InterPro" id="IPR015870">
    <property type="entry name" value="UDP-acyl_N-AcGlcN_deAcase_N"/>
</dbReference>
<dbReference type="NCBIfam" id="TIGR00325">
    <property type="entry name" value="lpxC"/>
    <property type="match status" value="1"/>
</dbReference>
<dbReference type="PANTHER" id="PTHR33694">
    <property type="entry name" value="UDP-3-O-ACYL-N-ACETYLGLUCOSAMINE DEACETYLASE 1, MITOCHONDRIAL-RELATED"/>
    <property type="match status" value="1"/>
</dbReference>
<dbReference type="PANTHER" id="PTHR33694:SF1">
    <property type="entry name" value="UDP-3-O-ACYL-N-ACETYLGLUCOSAMINE DEACETYLASE 1, MITOCHONDRIAL-RELATED"/>
    <property type="match status" value="1"/>
</dbReference>
<dbReference type="Pfam" id="PF03331">
    <property type="entry name" value="LpxC"/>
    <property type="match status" value="1"/>
</dbReference>
<dbReference type="SUPFAM" id="SSF54211">
    <property type="entry name" value="Ribosomal protein S5 domain 2-like"/>
    <property type="match status" value="2"/>
</dbReference>